<sequence>MMPLLLLILLSTRNLLGAAQSQESPVAGERRALDLTTVYVLPRSEPINATVEHKCREALASCYNGSEFQPLHDDGPIRPDPYRFSTMIRFKRSYGELPLPIELNDEFLEQLSLLHNNTDQLRVLLTLMRTSRASDWMSFLGGYTQCDAPKSVVFTCVESVCYEHDLMRLNYTTDLFTENVLGLDVSPPVLSVLVLLRNNHTKAESVVRVPTSSMSLLDGTYNLLRTILGHMSLDTDLIGVLRSYRDRFPAVFSVSDQIKITRQHYRPQYQRKRP</sequence>
<keyword id="KW-1015">Disulfide bond</keyword>
<keyword id="KW-1169">Fusion of virus membrane with host cell membrane</keyword>
<keyword id="KW-1168">Fusion of virus membrane with host membrane</keyword>
<keyword id="KW-0325">Glycoprotein</keyword>
<keyword id="KW-1032">Host cell membrane</keyword>
<keyword id="KW-1040">Host Golgi apparatus</keyword>
<keyword id="KW-1043">Host membrane</keyword>
<keyword id="KW-0472">Membrane</keyword>
<keyword id="KW-1185">Reference proteome</keyword>
<keyword id="KW-0732">Signal</keyword>
<keyword id="KW-0261">Viral envelope protein</keyword>
<keyword id="KW-1162">Viral penetration into host cytoplasm</keyword>
<keyword id="KW-0946">Virion</keyword>
<keyword id="KW-1160">Virus entry into host cell</keyword>
<name>GL_MUHVS</name>
<comment type="function">
    <text evidence="1">The heterodimer glycoprotein H-glycoprotein L is required for the fusion of viral and plasma membranes leading to virus entry into the host cell. Acts as a functional inhibitor of gH and maintains gH in an inhibited form. Upon binding to host integrins, gL dissociates from gH leading to activation of the viral fusion glycoproteins gB and gH.</text>
</comment>
<comment type="subunit">
    <text evidence="1">Interacts with glycoprotein H (gH); this interaction is necessary for the correct processing and cell surface expression of gH.</text>
</comment>
<comment type="subcellular location">
    <subcellularLocation>
        <location evidence="1">Virion membrane</location>
        <topology evidence="1">Peripheral membrane protein</topology>
        <orientation evidence="1">Extracellular side</orientation>
    </subcellularLocation>
    <subcellularLocation>
        <location evidence="1">Host cell membrane</location>
        <topology evidence="1">Peripheral membrane protein</topology>
        <orientation evidence="1">Extracellular side</orientation>
    </subcellularLocation>
    <subcellularLocation>
        <location evidence="1">Host Golgi apparatus</location>
        <location evidence="1">Host trans-Golgi network</location>
    </subcellularLocation>
    <text evidence="1">gL associates with the extravirion surface through its binding to gH. During virion morphogenesis, this protein probably accumulates in the host trans-Golgi where secondary envelopment occurs.</text>
</comment>
<comment type="similarity">
    <text evidence="2">Belongs to the herpesviridae glycoprotein L (gL) family. Betaherpesvirinae gL subfamily.</text>
</comment>
<reference key="1">
    <citation type="journal article" date="1994" name="J. Gen. Virol.">
        <title>Identification, sequencing and expression of the glycoprotein L gene of murine cytomegalovirus.</title>
        <authorList>
            <person name="Xu J."/>
            <person name="Scalzo A.A."/>
            <person name="Lyons P.A."/>
            <person name="Farrell H.E."/>
            <person name="Rawlinson W.D."/>
            <person name="Shellam G.R."/>
        </authorList>
    </citation>
    <scope>NUCLEOTIDE SEQUENCE [GENOMIC DNA]</scope>
</reference>
<reference key="2">
    <citation type="journal article" date="1996" name="J. Virol.">
        <title>Analysis of the complete DNA sequence of murine cytomegalovirus.</title>
        <authorList>
            <person name="Rawlinson W.D."/>
            <person name="Farrell H.E."/>
            <person name="Barrell B.G."/>
        </authorList>
    </citation>
    <scope>NUCLEOTIDE SEQUENCE [LARGE SCALE GENOMIC DNA]</scope>
</reference>
<accession>P52514</accession>
<proteinExistence type="inferred from homology"/>
<organism>
    <name type="scientific">Murid herpesvirus 1 (strain Smith)</name>
    <name type="common">MuHV-1</name>
    <name type="synonym">Mouse cytomegalovirus</name>
    <dbReference type="NCBI Taxonomy" id="10367"/>
    <lineage>
        <taxon>Viruses</taxon>
        <taxon>Duplodnaviria</taxon>
        <taxon>Heunggongvirae</taxon>
        <taxon>Peploviricota</taxon>
        <taxon>Herviviricetes</taxon>
        <taxon>Herpesvirales</taxon>
        <taxon>Orthoherpesviridae</taxon>
        <taxon>Betaherpesvirinae</taxon>
        <taxon>Muromegalovirus</taxon>
        <taxon>Muromegalovirus muridbeta1</taxon>
        <taxon>Murid herpesvirus 1</taxon>
    </lineage>
</organism>
<dbReference type="EMBL" id="L32963">
    <property type="protein sequence ID" value="AAA57344.1"/>
    <property type="molecule type" value="Genomic_DNA"/>
</dbReference>
<dbReference type="EMBL" id="U68299">
    <property type="status" value="NOT_ANNOTATED_CDS"/>
    <property type="molecule type" value="Genomic_DNA"/>
</dbReference>
<dbReference type="RefSeq" id="YP_214110.1">
    <property type="nucleotide sequence ID" value="NC_004065.1"/>
</dbReference>
<dbReference type="SMR" id="P52514"/>
<dbReference type="KEGG" id="vg:3293865"/>
<dbReference type="Proteomes" id="UP000008774">
    <property type="component" value="Segment"/>
</dbReference>
<dbReference type="GO" id="GO:0044177">
    <property type="term" value="C:host cell Golgi apparatus"/>
    <property type="evidence" value="ECO:0007669"/>
    <property type="project" value="UniProtKB-SubCell"/>
</dbReference>
<dbReference type="GO" id="GO:0020002">
    <property type="term" value="C:host cell plasma membrane"/>
    <property type="evidence" value="ECO:0007669"/>
    <property type="project" value="UniProtKB-SubCell"/>
</dbReference>
<dbReference type="GO" id="GO:0016020">
    <property type="term" value="C:membrane"/>
    <property type="evidence" value="ECO:0007669"/>
    <property type="project" value="UniProtKB-KW"/>
</dbReference>
<dbReference type="GO" id="GO:0019031">
    <property type="term" value="C:viral envelope"/>
    <property type="evidence" value="ECO:0007669"/>
    <property type="project" value="UniProtKB-UniRule"/>
</dbReference>
<dbReference type="GO" id="GO:0055036">
    <property type="term" value="C:virion membrane"/>
    <property type="evidence" value="ECO:0007669"/>
    <property type="project" value="UniProtKB-SubCell"/>
</dbReference>
<dbReference type="GO" id="GO:0019064">
    <property type="term" value="P:fusion of virus membrane with host plasma membrane"/>
    <property type="evidence" value="ECO:0007669"/>
    <property type="project" value="UniProtKB-UniRule"/>
</dbReference>
<dbReference type="GO" id="GO:0046718">
    <property type="term" value="P:symbiont entry into host cell"/>
    <property type="evidence" value="ECO:0007669"/>
    <property type="project" value="UniProtKB-KW"/>
</dbReference>
<dbReference type="HAMAP" id="MF_04036">
    <property type="entry name" value="HSV_GL_betahv"/>
    <property type="match status" value="1"/>
</dbReference>
<dbReference type="InterPro" id="IPR002689">
    <property type="entry name" value="Cytomegalo_gL"/>
</dbReference>
<dbReference type="Pfam" id="PF01801">
    <property type="entry name" value="Cytomega_gL"/>
    <property type="match status" value="1"/>
</dbReference>
<dbReference type="PROSITE" id="PS52025">
    <property type="entry name" value="GL_BHV"/>
    <property type="match status" value="1"/>
</dbReference>
<evidence type="ECO:0000255" key="1">
    <source>
        <dbReference type="HAMAP-Rule" id="MF_04036"/>
    </source>
</evidence>
<evidence type="ECO:0000255" key="2">
    <source>
        <dbReference type="PROSITE-ProRule" id="PRU01369"/>
    </source>
</evidence>
<gene>
    <name evidence="1" type="primary">gL</name>
    <name type="synonym">UL115</name>
</gene>
<feature type="signal peptide" evidence="1">
    <location>
        <begin position="1"/>
        <end position="21"/>
    </location>
</feature>
<feature type="chain" id="PRO_0000038289" description="Envelope glycoprotein L" evidence="1">
    <location>
        <begin position="22"/>
        <end position="274"/>
    </location>
</feature>
<feature type="domain" description="gL betaherpesvirus-type" evidence="2">
    <location>
        <begin position="51"/>
        <end position="251"/>
    </location>
</feature>
<feature type="disulfide bond" description="Interchain" evidence="2">
    <location>
        <position position="55"/>
    </location>
</feature>
<feature type="disulfide bond" description="Interchain" evidence="2">
    <location>
        <position position="62"/>
    </location>
</feature>
<feature type="disulfide bond" description="Interchain" evidence="2">
    <location>
        <position position="146"/>
    </location>
</feature>
<feature type="disulfide bond" evidence="2">
    <location>
        <begin position="156"/>
        <end position="161"/>
    </location>
</feature>
<organismHost>
    <name type="scientific">Mus musculus</name>
    <name type="common">Mouse</name>
    <dbReference type="NCBI Taxonomy" id="10090"/>
</organismHost>
<protein>
    <recommendedName>
        <fullName evidence="1">Envelope glycoprotein L</fullName>
        <shortName evidence="1">gL</shortName>
    </recommendedName>
</protein>